<feature type="chain" id="PRO_1000086656" description="Large ribosomal subunit protein uL18">
    <location>
        <begin position="1"/>
        <end position="120"/>
    </location>
</feature>
<comment type="function">
    <text evidence="1">This is one of the proteins that bind and probably mediate the attachment of the 5S RNA into the large ribosomal subunit, where it forms part of the central protuberance.</text>
</comment>
<comment type="subunit">
    <text evidence="1">Part of the 50S ribosomal subunit; part of the 5S rRNA/L5/L18/L25 subcomplex. Contacts the 5S and 23S rRNAs.</text>
</comment>
<comment type="similarity">
    <text evidence="1">Belongs to the universal ribosomal protein uL18 family.</text>
</comment>
<sequence>MGKRTPRELRLRRHNRIRKRVFGTPERPRLNVFRSHVHIYAQVIDDTVGHTLVAASTNEKGWSGSPELTKTQEAALVGKLIAERALQAGITKVVFDRGGYKYHGRVKALAEAAREAGLNF</sequence>
<name>RL18_CHLAA</name>
<proteinExistence type="inferred from homology"/>
<dbReference type="EMBL" id="CP000909">
    <property type="protein sequence ID" value="ABY35594.1"/>
    <property type="molecule type" value="Genomic_DNA"/>
</dbReference>
<dbReference type="RefSeq" id="WP_012258247.1">
    <property type="nucleotide sequence ID" value="NC_010175.1"/>
</dbReference>
<dbReference type="RefSeq" id="YP_001635983.1">
    <property type="nucleotide sequence ID" value="NC_010175.1"/>
</dbReference>
<dbReference type="SMR" id="A9WH82"/>
<dbReference type="FunCoup" id="A9WH82">
    <property type="interactions" value="456"/>
</dbReference>
<dbReference type="STRING" id="324602.Caur_2385"/>
<dbReference type="EnsemblBacteria" id="ABY35594">
    <property type="protein sequence ID" value="ABY35594"/>
    <property type="gene ID" value="Caur_2385"/>
</dbReference>
<dbReference type="KEGG" id="cau:Caur_2385"/>
<dbReference type="PATRIC" id="fig|324602.8.peg.2699"/>
<dbReference type="eggNOG" id="COG0256">
    <property type="taxonomic scope" value="Bacteria"/>
</dbReference>
<dbReference type="HOGENOM" id="CLU_098841_0_1_0"/>
<dbReference type="InParanoid" id="A9WH82"/>
<dbReference type="Proteomes" id="UP000002008">
    <property type="component" value="Chromosome"/>
</dbReference>
<dbReference type="GO" id="GO:0022625">
    <property type="term" value="C:cytosolic large ribosomal subunit"/>
    <property type="evidence" value="ECO:0000318"/>
    <property type="project" value="GO_Central"/>
</dbReference>
<dbReference type="GO" id="GO:0008097">
    <property type="term" value="F:5S rRNA binding"/>
    <property type="evidence" value="ECO:0000318"/>
    <property type="project" value="GO_Central"/>
</dbReference>
<dbReference type="GO" id="GO:0003735">
    <property type="term" value="F:structural constituent of ribosome"/>
    <property type="evidence" value="ECO:0007669"/>
    <property type="project" value="InterPro"/>
</dbReference>
<dbReference type="GO" id="GO:0006412">
    <property type="term" value="P:translation"/>
    <property type="evidence" value="ECO:0007669"/>
    <property type="project" value="UniProtKB-UniRule"/>
</dbReference>
<dbReference type="CDD" id="cd00432">
    <property type="entry name" value="Ribosomal_L18_L5e"/>
    <property type="match status" value="1"/>
</dbReference>
<dbReference type="FunFam" id="3.30.420.100:FF:000001">
    <property type="entry name" value="50S ribosomal protein L18"/>
    <property type="match status" value="1"/>
</dbReference>
<dbReference type="Gene3D" id="3.30.420.100">
    <property type="match status" value="1"/>
</dbReference>
<dbReference type="HAMAP" id="MF_01337_B">
    <property type="entry name" value="Ribosomal_uL18_B"/>
    <property type="match status" value="1"/>
</dbReference>
<dbReference type="InterPro" id="IPR004389">
    <property type="entry name" value="Ribosomal_uL18_bac-type"/>
</dbReference>
<dbReference type="InterPro" id="IPR005484">
    <property type="entry name" value="Ribosomal_uL18_bac/euk"/>
</dbReference>
<dbReference type="NCBIfam" id="TIGR00060">
    <property type="entry name" value="L18_bact"/>
    <property type="match status" value="1"/>
</dbReference>
<dbReference type="PANTHER" id="PTHR12899">
    <property type="entry name" value="39S RIBOSOMAL PROTEIN L18, MITOCHONDRIAL"/>
    <property type="match status" value="1"/>
</dbReference>
<dbReference type="PANTHER" id="PTHR12899:SF3">
    <property type="entry name" value="LARGE RIBOSOMAL SUBUNIT PROTEIN UL18M"/>
    <property type="match status" value="1"/>
</dbReference>
<dbReference type="Pfam" id="PF00861">
    <property type="entry name" value="Ribosomal_L18p"/>
    <property type="match status" value="1"/>
</dbReference>
<dbReference type="SUPFAM" id="SSF53137">
    <property type="entry name" value="Translational machinery components"/>
    <property type="match status" value="1"/>
</dbReference>
<organism>
    <name type="scientific">Chloroflexus aurantiacus (strain ATCC 29366 / DSM 635 / J-10-fl)</name>
    <dbReference type="NCBI Taxonomy" id="324602"/>
    <lineage>
        <taxon>Bacteria</taxon>
        <taxon>Bacillati</taxon>
        <taxon>Chloroflexota</taxon>
        <taxon>Chloroflexia</taxon>
        <taxon>Chloroflexales</taxon>
        <taxon>Chloroflexineae</taxon>
        <taxon>Chloroflexaceae</taxon>
        <taxon>Chloroflexus</taxon>
    </lineage>
</organism>
<evidence type="ECO:0000255" key="1">
    <source>
        <dbReference type="HAMAP-Rule" id="MF_01337"/>
    </source>
</evidence>
<evidence type="ECO:0000305" key="2"/>
<protein>
    <recommendedName>
        <fullName evidence="1">Large ribosomal subunit protein uL18</fullName>
    </recommendedName>
    <alternativeName>
        <fullName evidence="2">50S ribosomal protein L18</fullName>
    </alternativeName>
</protein>
<keyword id="KW-1185">Reference proteome</keyword>
<keyword id="KW-0687">Ribonucleoprotein</keyword>
<keyword id="KW-0689">Ribosomal protein</keyword>
<keyword id="KW-0694">RNA-binding</keyword>
<keyword id="KW-0699">rRNA-binding</keyword>
<gene>
    <name evidence="1" type="primary">rplR</name>
    <name type="ordered locus">Caur_2385</name>
</gene>
<reference key="1">
    <citation type="journal article" date="2011" name="BMC Genomics">
        <title>Complete genome sequence of the filamentous anoxygenic phototrophic bacterium Chloroflexus aurantiacus.</title>
        <authorList>
            <person name="Tang K.H."/>
            <person name="Barry K."/>
            <person name="Chertkov O."/>
            <person name="Dalin E."/>
            <person name="Han C.S."/>
            <person name="Hauser L.J."/>
            <person name="Honchak B.M."/>
            <person name="Karbach L.E."/>
            <person name="Land M.L."/>
            <person name="Lapidus A."/>
            <person name="Larimer F.W."/>
            <person name="Mikhailova N."/>
            <person name="Pitluck S."/>
            <person name="Pierson B.K."/>
            <person name="Blankenship R.E."/>
        </authorList>
    </citation>
    <scope>NUCLEOTIDE SEQUENCE [LARGE SCALE GENOMIC DNA]</scope>
    <source>
        <strain>ATCC 29366 / DSM 635 / J-10-fl</strain>
    </source>
</reference>
<accession>A9WH82</accession>